<feature type="chain" id="PRO_0000265478" description="Transcription antitermination protein NusB">
    <location>
        <begin position="1"/>
        <end position="211"/>
    </location>
</feature>
<accession>Q3MGI4</accession>
<reference key="1">
    <citation type="journal article" date="2014" name="Stand. Genomic Sci.">
        <title>Complete genome sequence of Anabaena variabilis ATCC 29413.</title>
        <authorList>
            <person name="Thiel T."/>
            <person name="Pratte B.S."/>
            <person name="Zhong J."/>
            <person name="Goodwin L."/>
            <person name="Copeland A."/>
            <person name="Lucas S."/>
            <person name="Han C."/>
            <person name="Pitluck S."/>
            <person name="Land M.L."/>
            <person name="Kyrpides N.C."/>
            <person name="Woyke T."/>
        </authorList>
    </citation>
    <scope>NUCLEOTIDE SEQUENCE [LARGE SCALE GENOMIC DNA]</scope>
    <source>
        <strain>ATCC 29413 / PCC 7937</strain>
    </source>
</reference>
<evidence type="ECO:0000255" key="1">
    <source>
        <dbReference type="HAMAP-Rule" id="MF_00073"/>
    </source>
</evidence>
<sequence length="211" mass="23742">MQDRKPQQIARELALLSLSQLPLNPKKLTEEHLPKLVLATVRTLRAEVQDTLDNAAAELQRSNDRLLTSQTRASDLNTARNMLQEAISHTQTAINQLGASVEFPELIQLANQDKEVGRYAIKLVKIINEERGMIDEQITSALVDWQVTRLAQIDRDILRIAVAEMMFLNLPNSVAINEAVELAKRYSGDEGHRFINGVLRRVSDQKKALSV</sequence>
<organism>
    <name type="scientific">Trichormus variabilis (strain ATCC 29413 / PCC 7937)</name>
    <name type="common">Anabaena variabilis</name>
    <dbReference type="NCBI Taxonomy" id="240292"/>
    <lineage>
        <taxon>Bacteria</taxon>
        <taxon>Bacillati</taxon>
        <taxon>Cyanobacteriota</taxon>
        <taxon>Cyanophyceae</taxon>
        <taxon>Nostocales</taxon>
        <taxon>Nostocaceae</taxon>
        <taxon>Trichormus</taxon>
    </lineage>
</organism>
<comment type="function">
    <text evidence="1">Involved in transcription antitermination. Required for transcription of ribosomal RNA (rRNA) genes. Binds specifically to the boxA antiterminator sequence of the ribosomal RNA (rrn) operons.</text>
</comment>
<comment type="similarity">
    <text evidence="1">Belongs to the NusB family.</text>
</comment>
<dbReference type="EMBL" id="CP000117">
    <property type="protein sequence ID" value="ABA19902.1"/>
    <property type="molecule type" value="Genomic_DNA"/>
</dbReference>
<dbReference type="SMR" id="Q3MGI4"/>
<dbReference type="STRING" id="240292.Ava_0276"/>
<dbReference type="KEGG" id="ava:Ava_0276"/>
<dbReference type="eggNOG" id="COG0781">
    <property type="taxonomic scope" value="Bacteria"/>
</dbReference>
<dbReference type="HOGENOM" id="CLU_087843_0_0_3"/>
<dbReference type="Proteomes" id="UP000002533">
    <property type="component" value="Chromosome"/>
</dbReference>
<dbReference type="GO" id="GO:0005829">
    <property type="term" value="C:cytosol"/>
    <property type="evidence" value="ECO:0007669"/>
    <property type="project" value="TreeGrafter"/>
</dbReference>
<dbReference type="GO" id="GO:0003723">
    <property type="term" value="F:RNA binding"/>
    <property type="evidence" value="ECO:0007669"/>
    <property type="project" value="UniProtKB-UniRule"/>
</dbReference>
<dbReference type="GO" id="GO:0006353">
    <property type="term" value="P:DNA-templated transcription termination"/>
    <property type="evidence" value="ECO:0007669"/>
    <property type="project" value="UniProtKB-UniRule"/>
</dbReference>
<dbReference type="GO" id="GO:0031564">
    <property type="term" value="P:transcription antitermination"/>
    <property type="evidence" value="ECO:0007669"/>
    <property type="project" value="UniProtKB-KW"/>
</dbReference>
<dbReference type="CDD" id="cd00619">
    <property type="entry name" value="Terminator_NusB"/>
    <property type="match status" value="1"/>
</dbReference>
<dbReference type="Gene3D" id="1.10.940.10">
    <property type="entry name" value="NusB-like"/>
    <property type="match status" value="1"/>
</dbReference>
<dbReference type="HAMAP" id="MF_00073">
    <property type="entry name" value="NusB"/>
    <property type="match status" value="1"/>
</dbReference>
<dbReference type="InterPro" id="IPR035926">
    <property type="entry name" value="NusB-like_sf"/>
</dbReference>
<dbReference type="InterPro" id="IPR011605">
    <property type="entry name" value="NusB_fam"/>
</dbReference>
<dbReference type="InterPro" id="IPR006027">
    <property type="entry name" value="NusB_RsmB_TIM44"/>
</dbReference>
<dbReference type="NCBIfam" id="TIGR01951">
    <property type="entry name" value="nusB"/>
    <property type="match status" value="1"/>
</dbReference>
<dbReference type="PANTHER" id="PTHR11078:SF3">
    <property type="entry name" value="ANTITERMINATION NUSB DOMAIN-CONTAINING PROTEIN"/>
    <property type="match status" value="1"/>
</dbReference>
<dbReference type="PANTHER" id="PTHR11078">
    <property type="entry name" value="N UTILIZATION SUBSTANCE PROTEIN B-RELATED"/>
    <property type="match status" value="1"/>
</dbReference>
<dbReference type="Pfam" id="PF01029">
    <property type="entry name" value="NusB"/>
    <property type="match status" value="1"/>
</dbReference>
<dbReference type="SUPFAM" id="SSF48013">
    <property type="entry name" value="NusB-like"/>
    <property type="match status" value="1"/>
</dbReference>
<name>NUSB_TRIV2</name>
<proteinExistence type="inferred from homology"/>
<protein>
    <recommendedName>
        <fullName evidence="1">Transcription antitermination protein NusB</fullName>
    </recommendedName>
    <alternativeName>
        <fullName evidence="1">Antitermination factor NusB</fullName>
    </alternativeName>
</protein>
<gene>
    <name evidence="1" type="primary">nusB</name>
    <name type="ordered locus">Ava_0276</name>
</gene>
<keyword id="KW-0694">RNA-binding</keyword>
<keyword id="KW-0804">Transcription</keyword>
<keyword id="KW-0889">Transcription antitermination</keyword>
<keyword id="KW-0805">Transcription regulation</keyword>